<proteinExistence type="inferred from homology"/>
<comment type="function">
    <text evidence="2">Cell wall formation.</text>
</comment>
<comment type="catalytic activity">
    <reaction evidence="2">
        <text>2 D-alanine + ATP = D-alanyl-D-alanine + ADP + phosphate + H(+)</text>
        <dbReference type="Rhea" id="RHEA:11224"/>
        <dbReference type="ChEBI" id="CHEBI:15378"/>
        <dbReference type="ChEBI" id="CHEBI:30616"/>
        <dbReference type="ChEBI" id="CHEBI:43474"/>
        <dbReference type="ChEBI" id="CHEBI:57416"/>
        <dbReference type="ChEBI" id="CHEBI:57822"/>
        <dbReference type="ChEBI" id="CHEBI:456216"/>
        <dbReference type="EC" id="6.3.2.4"/>
    </reaction>
</comment>
<comment type="cofactor">
    <cofactor evidence="1">
        <name>Mg(2+)</name>
        <dbReference type="ChEBI" id="CHEBI:18420"/>
    </cofactor>
    <cofactor evidence="1">
        <name>Mn(2+)</name>
        <dbReference type="ChEBI" id="CHEBI:29035"/>
    </cofactor>
    <text evidence="1">Binds 2 magnesium or manganese ions per subunit.</text>
</comment>
<comment type="pathway">
    <text evidence="2">Cell wall biogenesis; peptidoglycan biosynthesis.</text>
</comment>
<comment type="subcellular location">
    <subcellularLocation>
        <location evidence="2">Cytoplasm</location>
    </subcellularLocation>
</comment>
<comment type="similarity">
    <text evidence="2">Belongs to the D-alanine--D-alanine ligase family.</text>
</comment>
<gene>
    <name evidence="2" type="primary">ddl</name>
    <name type="ordered locus">SAG0767</name>
</gene>
<keyword id="KW-0067">ATP-binding</keyword>
<keyword id="KW-0133">Cell shape</keyword>
<keyword id="KW-0961">Cell wall biogenesis/degradation</keyword>
<keyword id="KW-0963">Cytoplasm</keyword>
<keyword id="KW-0436">Ligase</keyword>
<keyword id="KW-0460">Magnesium</keyword>
<keyword id="KW-0464">Manganese</keyword>
<keyword id="KW-0479">Metal-binding</keyword>
<keyword id="KW-0547">Nucleotide-binding</keyword>
<keyword id="KW-0573">Peptidoglycan synthesis</keyword>
<keyword id="KW-1185">Reference proteome</keyword>
<organism>
    <name type="scientific">Streptococcus agalactiae serotype V (strain ATCC BAA-611 / 2603 V/R)</name>
    <dbReference type="NCBI Taxonomy" id="208435"/>
    <lineage>
        <taxon>Bacteria</taxon>
        <taxon>Bacillati</taxon>
        <taxon>Bacillota</taxon>
        <taxon>Bacilli</taxon>
        <taxon>Lactobacillales</taxon>
        <taxon>Streptococcaceae</taxon>
        <taxon>Streptococcus</taxon>
    </lineage>
</organism>
<protein>
    <recommendedName>
        <fullName evidence="2">D-alanine--D-alanine ligase</fullName>
        <ecNumber evidence="2">6.3.2.4</ecNumber>
    </recommendedName>
    <alternativeName>
        <fullName evidence="2">D-Ala-D-Ala ligase</fullName>
    </alternativeName>
    <alternativeName>
        <fullName evidence="2">D-alanylalanine synthetase</fullName>
    </alternativeName>
</protein>
<evidence type="ECO:0000250" key="1"/>
<evidence type="ECO:0000255" key="2">
    <source>
        <dbReference type="HAMAP-Rule" id="MF_00047"/>
    </source>
</evidence>
<name>DDL_STRA5</name>
<dbReference type="EC" id="6.3.2.4" evidence="2"/>
<dbReference type="EMBL" id="AE009948">
    <property type="protein sequence ID" value="AAM99654.1"/>
    <property type="molecule type" value="Genomic_DNA"/>
</dbReference>
<dbReference type="RefSeq" id="NP_687782.1">
    <property type="nucleotide sequence ID" value="NC_004116.1"/>
</dbReference>
<dbReference type="RefSeq" id="WP_000032513.1">
    <property type="nucleotide sequence ID" value="NC_004116.1"/>
</dbReference>
<dbReference type="SMR" id="Q8E0G6"/>
<dbReference type="STRING" id="208435.SAG0767"/>
<dbReference type="KEGG" id="sag:SAG0767"/>
<dbReference type="PATRIC" id="fig|208435.3.peg.774"/>
<dbReference type="HOGENOM" id="CLU_039268_0_0_9"/>
<dbReference type="OrthoDB" id="9813261at2"/>
<dbReference type="UniPathway" id="UPA00219"/>
<dbReference type="Proteomes" id="UP000000821">
    <property type="component" value="Chromosome"/>
</dbReference>
<dbReference type="GO" id="GO:0005829">
    <property type="term" value="C:cytosol"/>
    <property type="evidence" value="ECO:0007669"/>
    <property type="project" value="TreeGrafter"/>
</dbReference>
<dbReference type="GO" id="GO:0005524">
    <property type="term" value="F:ATP binding"/>
    <property type="evidence" value="ECO:0007669"/>
    <property type="project" value="UniProtKB-KW"/>
</dbReference>
<dbReference type="GO" id="GO:0008716">
    <property type="term" value="F:D-alanine-D-alanine ligase activity"/>
    <property type="evidence" value="ECO:0007669"/>
    <property type="project" value="UniProtKB-UniRule"/>
</dbReference>
<dbReference type="GO" id="GO:0046872">
    <property type="term" value="F:metal ion binding"/>
    <property type="evidence" value="ECO:0007669"/>
    <property type="project" value="UniProtKB-KW"/>
</dbReference>
<dbReference type="GO" id="GO:0071555">
    <property type="term" value="P:cell wall organization"/>
    <property type="evidence" value="ECO:0007669"/>
    <property type="project" value="UniProtKB-KW"/>
</dbReference>
<dbReference type="GO" id="GO:0009252">
    <property type="term" value="P:peptidoglycan biosynthetic process"/>
    <property type="evidence" value="ECO:0007669"/>
    <property type="project" value="UniProtKB-UniRule"/>
</dbReference>
<dbReference type="GO" id="GO:0008360">
    <property type="term" value="P:regulation of cell shape"/>
    <property type="evidence" value="ECO:0007669"/>
    <property type="project" value="UniProtKB-KW"/>
</dbReference>
<dbReference type="FunFam" id="3.30.1490.20:FF:000007">
    <property type="entry name" value="D-alanine--D-alanine ligase"/>
    <property type="match status" value="1"/>
</dbReference>
<dbReference type="FunFam" id="3.30.470.20:FF:000008">
    <property type="entry name" value="D-alanine--D-alanine ligase"/>
    <property type="match status" value="1"/>
</dbReference>
<dbReference type="Gene3D" id="3.40.50.20">
    <property type="match status" value="1"/>
</dbReference>
<dbReference type="Gene3D" id="3.30.1490.20">
    <property type="entry name" value="ATP-grasp fold, A domain"/>
    <property type="match status" value="1"/>
</dbReference>
<dbReference type="Gene3D" id="3.30.470.20">
    <property type="entry name" value="ATP-grasp fold, B domain"/>
    <property type="match status" value="1"/>
</dbReference>
<dbReference type="HAMAP" id="MF_00047">
    <property type="entry name" value="Dala_Dala_lig"/>
    <property type="match status" value="1"/>
</dbReference>
<dbReference type="InterPro" id="IPR011761">
    <property type="entry name" value="ATP-grasp"/>
</dbReference>
<dbReference type="InterPro" id="IPR013815">
    <property type="entry name" value="ATP_grasp_subdomain_1"/>
</dbReference>
<dbReference type="InterPro" id="IPR000291">
    <property type="entry name" value="D-Ala_lig_Van_CS"/>
</dbReference>
<dbReference type="InterPro" id="IPR005905">
    <property type="entry name" value="D_ala_D_ala"/>
</dbReference>
<dbReference type="InterPro" id="IPR011095">
    <property type="entry name" value="Dala_Dala_lig_C"/>
</dbReference>
<dbReference type="InterPro" id="IPR011127">
    <property type="entry name" value="Dala_Dala_lig_N"/>
</dbReference>
<dbReference type="InterPro" id="IPR016185">
    <property type="entry name" value="PreATP-grasp_dom_sf"/>
</dbReference>
<dbReference type="NCBIfam" id="TIGR01205">
    <property type="entry name" value="D_ala_D_alaTIGR"/>
    <property type="match status" value="1"/>
</dbReference>
<dbReference type="NCBIfam" id="NF002528">
    <property type="entry name" value="PRK01966.1-4"/>
    <property type="match status" value="1"/>
</dbReference>
<dbReference type="NCBIfam" id="NF002529">
    <property type="entry name" value="PRK01966.1-5"/>
    <property type="match status" value="1"/>
</dbReference>
<dbReference type="PANTHER" id="PTHR23132">
    <property type="entry name" value="D-ALANINE--D-ALANINE LIGASE"/>
    <property type="match status" value="1"/>
</dbReference>
<dbReference type="PANTHER" id="PTHR23132:SF25">
    <property type="entry name" value="D-ALANINE--D-ALANINE LIGASE A"/>
    <property type="match status" value="1"/>
</dbReference>
<dbReference type="Pfam" id="PF07478">
    <property type="entry name" value="Dala_Dala_lig_C"/>
    <property type="match status" value="1"/>
</dbReference>
<dbReference type="Pfam" id="PF01820">
    <property type="entry name" value="Dala_Dala_lig_N"/>
    <property type="match status" value="1"/>
</dbReference>
<dbReference type="PIRSF" id="PIRSF039102">
    <property type="entry name" value="Ddl/VanB"/>
    <property type="match status" value="1"/>
</dbReference>
<dbReference type="SUPFAM" id="SSF56059">
    <property type="entry name" value="Glutathione synthetase ATP-binding domain-like"/>
    <property type="match status" value="1"/>
</dbReference>
<dbReference type="SUPFAM" id="SSF52440">
    <property type="entry name" value="PreATP-grasp domain"/>
    <property type="match status" value="1"/>
</dbReference>
<dbReference type="PROSITE" id="PS50975">
    <property type="entry name" value="ATP_GRASP"/>
    <property type="match status" value="1"/>
</dbReference>
<dbReference type="PROSITE" id="PS00843">
    <property type="entry name" value="DALA_DALA_LIGASE_1"/>
    <property type="match status" value="1"/>
</dbReference>
<dbReference type="PROSITE" id="PS00844">
    <property type="entry name" value="DALA_DALA_LIGASE_2"/>
    <property type="match status" value="1"/>
</dbReference>
<reference key="1">
    <citation type="journal article" date="2002" name="Proc. Natl. Acad. Sci. U.S.A.">
        <title>Complete genome sequence and comparative genomic analysis of an emerging human pathogen, serotype V Streptococcus agalactiae.</title>
        <authorList>
            <person name="Tettelin H."/>
            <person name="Masignani V."/>
            <person name="Cieslewicz M.J."/>
            <person name="Eisen J.A."/>
            <person name="Peterson S.N."/>
            <person name="Wessels M.R."/>
            <person name="Paulsen I.T."/>
            <person name="Nelson K.E."/>
            <person name="Margarit I."/>
            <person name="Read T.D."/>
            <person name="Madoff L.C."/>
            <person name="Wolf A.M."/>
            <person name="Beanan M.J."/>
            <person name="Brinkac L.M."/>
            <person name="Daugherty S.C."/>
            <person name="DeBoy R.T."/>
            <person name="Durkin A.S."/>
            <person name="Kolonay J.F."/>
            <person name="Madupu R."/>
            <person name="Lewis M.R."/>
            <person name="Radune D."/>
            <person name="Fedorova N.B."/>
            <person name="Scanlan D."/>
            <person name="Khouri H.M."/>
            <person name="Mulligan S."/>
            <person name="Carty H.A."/>
            <person name="Cline R.T."/>
            <person name="Van Aken S.E."/>
            <person name="Gill J."/>
            <person name="Scarselli M."/>
            <person name="Mora M."/>
            <person name="Iacobini E.T."/>
            <person name="Brettoni C."/>
            <person name="Galli G."/>
            <person name="Mariani M."/>
            <person name="Vegni F."/>
            <person name="Maione D."/>
            <person name="Rinaudo D."/>
            <person name="Rappuoli R."/>
            <person name="Telford J.L."/>
            <person name="Kasper D.L."/>
            <person name="Grandi G."/>
            <person name="Fraser C.M."/>
        </authorList>
    </citation>
    <scope>NUCLEOTIDE SEQUENCE [LARGE SCALE GENOMIC DNA]</scope>
    <source>
        <strain>ATCC BAA-611 / 2603 V/R</strain>
    </source>
</reference>
<feature type="chain" id="PRO_0000177883" description="D-alanine--D-alanine ligase">
    <location>
        <begin position="1"/>
        <end position="348"/>
    </location>
</feature>
<feature type="domain" description="ATP-grasp" evidence="2">
    <location>
        <begin position="132"/>
        <end position="334"/>
    </location>
</feature>
<feature type="binding site" evidence="2">
    <location>
        <begin position="162"/>
        <end position="217"/>
    </location>
    <ligand>
        <name>ATP</name>
        <dbReference type="ChEBI" id="CHEBI:30616"/>
    </ligand>
</feature>
<feature type="binding site" evidence="2">
    <location>
        <position position="288"/>
    </location>
    <ligand>
        <name>Mg(2+)</name>
        <dbReference type="ChEBI" id="CHEBI:18420"/>
        <label>1</label>
    </ligand>
</feature>
<feature type="binding site" evidence="2">
    <location>
        <position position="301"/>
    </location>
    <ligand>
        <name>Mg(2+)</name>
        <dbReference type="ChEBI" id="CHEBI:18420"/>
        <label>1</label>
    </ligand>
</feature>
<feature type="binding site" evidence="2">
    <location>
        <position position="301"/>
    </location>
    <ligand>
        <name>Mg(2+)</name>
        <dbReference type="ChEBI" id="CHEBI:18420"/>
        <label>2</label>
    </ligand>
</feature>
<feature type="binding site" evidence="2">
    <location>
        <position position="303"/>
    </location>
    <ligand>
        <name>Mg(2+)</name>
        <dbReference type="ChEBI" id="CHEBI:18420"/>
        <label>2</label>
    </ligand>
</feature>
<accession>Q8E0G6</accession>
<sequence>MSKETLILLYGGRSAEREVSVLSAESVMRAINYDKFFVKTYFITQVGQFIKTQEFDEMPSSDEKLMTNQTVDLDKMVRPSDIYDDNAIVFPVLHGPMGEDGSIQGFLEVLRMPYVGTNILSSSVAMDKITTKQVLATVGVPQVAYQTYFEGDDLEHAIKLSLETLSFPIFVKPANMGSSVGISKATDESSLRSAIDLALKYDSRILIEQGVTAREIEVGILGNNDVKTTFPGEVVKDVDFYDYDAKYIDNKITMDIPAKVDEATMEAMRQYASKAFKAIGACGLSRCDFFLTKDGQIFLNELNTMPGFTQWSMYPLLWENMGLTYSDLIEKLVMLAKEMFEKRESHLI</sequence>